<accession>A6WVX4</accession>
<feature type="chain" id="PRO_1000083629" description="Protein ApaG">
    <location>
        <begin position="1"/>
        <end position="130"/>
    </location>
</feature>
<feature type="domain" description="ApaG" evidence="1">
    <location>
        <begin position="3"/>
        <end position="127"/>
    </location>
</feature>
<keyword id="KW-1185">Reference proteome</keyword>
<protein>
    <recommendedName>
        <fullName evidence="1">Protein ApaG</fullName>
    </recommendedName>
</protein>
<reference key="1">
    <citation type="journal article" date="2011" name="J. Bacteriol.">
        <title>Genome of Ochrobactrum anthropi ATCC 49188 T, a versatile opportunistic pathogen and symbiont of several eukaryotic hosts.</title>
        <authorList>
            <person name="Chain P.S."/>
            <person name="Lang D.M."/>
            <person name="Comerci D.J."/>
            <person name="Malfatti S.A."/>
            <person name="Vergez L.M."/>
            <person name="Shin M."/>
            <person name="Ugalde R.A."/>
            <person name="Garcia E."/>
            <person name="Tolmasky M.E."/>
        </authorList>
    </citation>
    <scope>NUCLEOTIDE SEQUENCE [LARGE SCALE GENOMIC DNA]</scope>
    <source>
        <strain>ATCC 49188 / DSM 6882 / CCUG 24695 / JCM 21032 / LMG 3331 / NBRC 15819 / NCTC 12168 / Alc 37</strain>
    </source>
</reference>
<proteinExistence type="inferred from homology"/>
<organism>
    <name type="scientific">Brucella anthropi (strain ATCC 49188 / DSM 6882 / CCUG 24695 / JCM 21032 / LMG 3331 / NBRC 15819 / NCTC 12168 / Alc 37)</name>
    <name type="common">Ochrobactrum anthropi</name>
    <dbReference type="NCBI Taxonomy" id="439375"/>
    <lineage>
        <taxon>Bacteria</taxon>
        <taxon>Pseudomonadati</taxon>
        <taxon>Pseudomonadota</taxon>
        <taxon>Alphaproteobacteria</taxon>
        <taxon>Hyphomicrobiales</taxon>
        <taxon>Brucellaceae</taxon>
        <taxon>Brucella/Ochrobactrum group</taxon>
        <taxon>Brucella</taxon>
    </lineage>
</organism>
<dbReference type="EMBL" id="CP000758">
    <property type="protein sequence ID" value="ABS13128.1"/>
    <property type="molecule type" value="Genomic_DNA"/>
</dbReference>
<dbReference type="RefSeq" id="WP_010658218.1">
    <property type="nucleotide sequence ID" value="NC_009667.1"/>
</dbReference>
<dbReference type="SMR" id="A6WVX4"/>
<dbReference type="STRING" id="439375.Oant_0397"/>
<dbReference type="GeneID" id="61316567"/>
<dbReference type="KEGG" id="oan:Oant_0397"/>
<dbReference type="eggNOG" id="COG2967">
    <property type="taxonomic scope" value="Bacteria"/>
</dbReference>
<dbReference type="HOGENOM" id="CLU_128074_1_0_5"/>
<dbReference type="Proteomes" id="UP000002301">
    <property type="component" value="Chromosome 1"/>
</dbReference>
<dbReference type="GO" id="GO:0070987">
    <property type="term" value="P:error-free translesion synthesis"/>
    <property type="evidence" value="ECO:0007669"/>
    <property type="project" value="TreeGrafter"/>
</dbReference>
<dbReference type="Gene3D" id="2.60.40.1470">
    <property type="entry name" value="ApaG domain"/>
    <property type="match status" value="1"/>
</dbReference>
<dbReference type="HAMAP" id="MF_00791">
    <property type="entry name" value="ApaG"/>
    <property type="match status" value="1"/>
</dbReference>
<dbReference type="InterPro" id="IPR007474">
    <property type="entry name" value="ApaG_domain"/>
</dbReference>
<dbReference type="InterPro" id="IPR036767">
    <property type="entry name" value="ApaG_sf"/>
</dbReference>
<dbReference type="InterPro" id="IPR023065">
    <property type="entry name" value="Uncharacterised_ApaG"/>
</dbReference>
<dbReference type="NCBIfam" id="NF003967">
    <property type="entry name" value="PRK05461.1"/>
    <property type="match status" value="1"/>
</dbReference>
<dbReference type="PANTHER" id="PTHR14289">
    <property type="entry name" value="F-BOX ONLY PROTEIN 3"/>
    <property type="match status" value="1"/>
</dbReference>
<dbReference type="PANTHER" id="PTHR14289:SF16">
    <property type="entry name" value="POLYMERASE DELTA-INTERACTING PROTEIN 2"/>
    <property type="match status" value="1"/>
</dbReference>
<dbReference type="Pfam" id="PF04379">
    <property type="entry name" value="DUF525"/>
    <property type="match status" value="1"/>
</dbReference>
<dbReference type="SUPFAM" id="SSF110069">
    <property type="entry name" value="ApaG-like"/>
    <property type="match status" value="1"/>
</dbReference>
<dbReference type="PROSITE" id="PS51087">
    <property type="entry name" value="APAG"/>
    <property type="match status" value="1"/>
</dbReference>
<gene>
    <name evidence="1" type="primary">apaG</name>
    <name type="ordered locus">Oant_0397</name>
</gene>
<evidence type="ECO:0000255" key="1">
    <source>
        <dbReference type="HAMAP-Rule" id="MF_00791"/>
    </source>
</evidence>
<name>APAG_BRUA4</name>
<sequence length="130" mass="14652">MYRAVTRGIEVSVEPFYLEDQSEPEENRYVWGYRITIANNSTETVQLRSRYWQITDANGYVEEVRGPGVVGEQPTLEPGDSFQYSSGCPLTTTSGVMVGRYQMQGNGGSLFEVDIPAFSLDIPEQRRTLN</sequence>